<reference key="1">
    <citation type="submission" date="2006-10" db="EMBL/GenBank/DDBJ databases">
        <authorList>
            <person name="Fleischmann R.D."/>
            <person name="Dodson R.J."/>
            <person name="Haft D.H."/>
            <person name="Merkel J.S."/>
            <person name="Nelson W.C."/>
            <person name="Fraser C.M."/>
        </authorList>
    </citation>
    <scope>NUCLEOTIDE SEQUENCE [LARGE SCALE GENOMIC DNA]</scope>
    <source>
        <strain>104</strain>
    </source>
</reference>
<gene>
    <name evidence="1" type="primary">nrdR</name>
    <name type="ordered locus">MAV_3612</name>
</gene>
<sequence>MHCPFCRHPDSRVIDSRETDEGQAIRRRRSCPECGRRFTTVETAVLAVVKRSGVTEPFSREKVISGVRRACQGRQVDDDALNLLAQQVEDTVRAAGSPEVPSHEVGLAILGPLRDLDEVAYLRFASVYRSFESADDFEREIQALREHRGVATPG</sequence>
<accession>A0QIQ1</accession>
<protein>
    <recommendedName>
        <fullName evidence="1">Transcriptional repressor NrdR</fullName>
    </recommendedName>
</protein>
<name>NRDR_MYCA1</name>
<evidence type="ECO:0000255" key="1">
    <source>
        <dbReference type="HAMAP-Rule" id="MF_00440"/>
    </source>
</evidence>
<organism>
    <name type="scientific">Mycobacterium avium (strain 104)</name>
    <dbReference type="NCBI Taxonomy" id="243243"/>
    <lineage>
        <taxon>Bacteria</taxon>
        <taxon>Bacillati</taxon>
        <taxon>Actinomycetota</taxon>
        <taxon>Actinomycetes</taxon>
        <taxon>Mycobacteriales</taxon>
        <taxon>Mycobacteriaceae</taxon>
        <taxon>Mycobacterium</taxon>
        <taxon>Mycobacterium avium complex (MAC)</taxon>
    </lineage>
</organism>
<keyword id="KW-0067">ATP-binding</keyword>
<keyword id="KW-0238">DNA-binding</keyword>
<keyword id="KW-0479">Metal-binding</keyword>
<keyword id="KW-0547">Nucleotide-binding</keyword>
<keyword id="KW-0678">Repressor</keyword>
<keyword id="KW-0804">Transcription</keyword>
<keyword id="KW-0805">Transcription regulation</keyword>
<keyword id="KW-0862">Zinc</keyword>
<keyword id="KW-0863">Zinc-finger</keyword>
<proteinExistence type="inferred from homology"/>
<comment type="function">
    <text evidence="1">Negatively regulates transcription of bacterial ribonucleotide reductase nrd genes and operons by binding to NrdR-boxes.</text>
</comment>
<comment type="cofactor">
    <cofactor evidence="1">
        <name>Zn(2+)</name>
        <dbReference type="ChEBI" id="CHEBI:29105"/>
    </cofactor>
    <text evidence="1">Binds 1 zinc ion.</text>
</comment>
<comment type="similarity">
    <text evidence="1">Belongs to the NrdR family.</text>
</comment>
<feature type="chain" id="PRO_1000080775" description="Transcriptional repressor NrdR">
    <location>
        <begin position="1"/>
        <end position="154"/>
    </location>
</feature>
<feature type="domain" description="ATP-cone" evidence="1">
    <location>
        <begin position="46"/>
        <end position="136"/>
    </location>
</feature>
<feature type="zinc finger region" evidence="1">
    <location>
        <begin position="3"/>
        <end position="34"/>
    </location>
</feature>
<dbReference type="EMBL" id="CP000479">
    <property type="protein sequence ID" value="ABK64696.1"/>
    <property type="molecule type" value="Genomic_DNA"/>
</dbReference>
<dbReference type="RefSeq" id="WP_003875225.1">
    <property type="nucleotide sequence ID" value="NC_008595.1"/>
</dbReference>
<dbReference type="SMR" id="A0QIQ1"/>
<dbReference type="GeneID" id="75271001"/>
<dbReference type="KEGG" id="mav:MAV_3612"/>
<dbReference type="HOGENOM" id="CLU_108412_1_0_11"/>
<dbReference type="Proteomes" id="UP000001574">
    <property type="component" value="Chromosome"/>
</dbReference>
<dbReference type="GO" id="GO:0005524">
    <property type="term" value="F:ATP binding"/>
    <property type="evidence" value="ECO:0007669"/>
    <property type="project" value="UniProtKB-KW"/>
</dbReference>
<dbReference type="GO" id="GO:0003677">
    <property type="term" value="F:DNA binding"/>
    <property type="evidence" value="ECO:0007669"/>
    <property type="project" value="UniProtKB-KW"/>
</dbReference>
<dbReference type="GO" id="GO:0008270">
    <property type="term" value="F:zinc ion binding"/>
    <property type="evidence" value="ECO:0007669"/>
    <property type="project" value="UniProtKB-UniRule"/>
</dbReference>
<dbReference type="GO" id="GO:0045892">
    <property type="term" value="P:negative regulation of DNA-templated transcription"/>
    <property type="evidence" value="ECO:0007669"/>
    <property type="project" value="UniProtKB-UniRule"/>
</dbReference>
<dbReference type="HAMAP" id="MF_00440">
    <property type="entry name" value="NrdR"/>
    <property type="match status" value="1"/>
</dbReference>
<dbReference type="InterPro" id="IPR005144">
    <property type="entry name" value="ATP-cone_dom"/>
</dbReference>
<dbReference type="InterPro" id="IPR055173">
    <property type="entry name" value="NrdR-like_N"/>
</dbReference>
<dbReference type="InterPro" id="IPR003796">
    <property type="entry name" value="RNR_NrdR-like"/>
</dbReference>
<dbReference type="NCBIfam" id="TIGR00244">
    <property type="entry name" value="transcriptional regulator NrdR"/>
    <property type="match status" value="1"/>
</dbReference>
<dbReference type="PANTHER" id="PTHR30455">
    <property type="entry name" value="TRANSCRIPTIONAL REPRESSOR NRDR"/>
    <property type="match status" value="1"/>
</dbReference>
<dbReference type="PANTHER" id="PTHR30455:SF2">
    <property type="entry name" value="TRANSCRIPTIONAL REPRESSOR NRDR"/>
    <property type="match status" value="1"/>
</dbReference>
<dbReference type="Pfam" id="PF03477">
    <property type="entry name" value="ATP-cone"/>
    <property type="match status" value="1"/>
</dbReference>
<dbReference type="Pfam" id="PF22811">
    <property type="entry name" value="Zn_ribbon_NrdR"/>
    <property type="match status" value="1"/>
</dbReference>
<dbReference type="PROSITE" id="PS51161">
    <property type="entry name" value="ATP_CONE"/>
    <property type="match status" value="1"/>
</dbReference>